<comment type="function">
    <text evidence="1">Nematode cuticles are composed largely of collagen-like proteins. The cuticle functions both as an exoskeleton and as a barrier to protect the worm from its environment (By similarity).</text>
</comment>
<comment type="subunit">
    <text evidence="1">Collagen polypeptide chains are complexed within the cuticle by disulfide bonds and other types of covalent cross-links.</text>
</comment>
<comment type="similarity">
    <text evidence="4">Belongs to the cuticular collagen family.</text>
</comment>
<gene>
    <name type="primary">col-155</name>
    <name type="ORF">F55C10.3</name>
</gene>
<evidence type="ECO:0000250" key="1"/>
<evidence type="ECO:0000255" key="2"/>
<evidence type="ECO:0000256" key="3">
    <source>
        <dbReference type="SAM" id="MobiDB-lite"/>
    </source>
</evidence>
<evidence type="ECO:0000305" key="4"/>
<keyword id="KW-0176">Collagen</keyword>
<keyword id="KW-0193">Cuticle</keyword>
<keyword id="KW-1015">Disulfide bond</keyword>
<keyword id="KW-1185">Reference proteome</keyword>
<keyword id="KW-0677">Repeat</keyword>
<keyword id="KW-0732">Signal</keyword>
<accession>Q21184</accession>
<accession>A9UJN5</accession>
<accession>Q20807</accession>
<name>CO155_CAEEL</name>
<protein>
    <recommendedName>
        <fullName>Putative cuticle collagen 155</fullName>
    </recommendedName>
</protein>
<feature type="signal peptide" evidence="2">
    <location>
        <begin position="1"/>
        <end position="27"/>
    </location>
</feature>
<feature type="chain" id="PRO_0000127604" description="Putative cuticle collagen 155">
    <location>
        <begin position="28"/>
        <end position="299"/>
    </location>
</feature>
<feature type="region of interest" description="Triple-helical region">
    <location>
        <begin position="103"/>
        <end position="132"/>
    </location>
</feature>
<feature type="region of interest" description="Disordered" evidence="3">
    <location>
        <begin position="107"/>
        <end position="278"/>
    </location>
</feature>
<feature type="region of interest" description="Triple-helical region">
    <location>
        <begin position="151"/>
        <end position="177"/>
    </location>
</feature>
<feature type="region of interest" description="Triple-helical region">
    <location>
        <begin position="181"/>
        <end position="202"/>
    </location>
</feature>
<feature type="region of interest" description="Triple-helical region">
    <location>
        <begin position="216"/>
        <end position="278"/>
    </location>
</feature>
<feature type="compositionally biased region" description="Pro residues" evidence="3">
    <location>
        <begin position="129"/>
        <end position="161"/>
    </location>
</feature>
<feature type="compositionally biased region" description="Gly residues" evidence="3">
    <location>
        <begin position="163"/>
        <end position="172"/>
    </location>
</feature>
<feature type="compositionally biased region" description="Low complexity" evidence="3">
    <location>
        <begin position="173"/>
        <end position="197"/>
    </location>
</feature>
<feature type="compositionally biased region" description="Pro residues" evidence="3">
    <location>
        <begin position="215"/>
        <end position="233"/>
    </location>
</feature>
<feature type="compositionally biased region" description="Low complexity" evidence="3">
    <location>
        <begin position="250"/>
        <end position="268"/>
    </location>
</feature>
<reference key="1">
    <citation type="journal article" date="1998" name="Science">
        <title>Genome sequence of the nematode C. elegans: a platform for investigating biology.</title>
        <authorList>
            <consortium name="The C. elegans sequencing consortium"/>
        </authorList>
    </citation>
    <scope>NUCLEOTIDE SEQUENCE [LARGE SCALE GENOMIC DNA]</scope>
    <source>
        <strain>Bristol N2</strain>
    </source>
</reference>
<dbReference type="EMBL" id="Z74036">
    <property type="protein sequence ID" value="CAA98487.2"/>
    <property type="molecule type" value="Genomic_DNA"/>
</dbReference>
<dbReference type="EMBL" id="Z74039">
    <property type="protein sequence ID" value="CAA98487.2"/>
    <property type="status" value="JOINED"/>
    <property type="molecule type" value="Genomic_DNA"/>
</dbReference>
<dbReference type="PIR" id="T22706">
    <property type="entry name" value="T22706"/>
</dbReference>
<dbReference type="RefSeq" id="NP_505888.2">
    <property type="nucleotide sequence ID" value="NM_073487.4"/>
</dbReference>
<dbReference type="SMR" id="Q21184"/>
<dbReference type="FunCoup" id="Q21184">
    <property type="interactions" value="8"/>
</dbReference>
<dbReference type="STRING" id="6239.F55C10.3.1"/>
<dbReference type="PaxDb" id="6239-F55C10.3"/>
<dbReference type="EnsemblMetazoa" id="F55C10.3.1">
    <property type="protein sequence ID" value="F55C10.3.1"/>
    <property type="gene ID" value="WBGene00000728"/>
</dbReference>
<dbReference type="GeneID" id="186301"/>
<dbReference type="KEGG" id="cel:CELE_F55C10.3"/>
<dbReference type="UCSC" id="F55C10.3">
    <property type="organism name" value="c. elegans"/>
</dbReference>
<dbReference type="AGR" id="WB:WBGene00000728"/>
<dbReference type="CTD" id="186301"/>
<dbReference type="WormBase" id="F55C10.3">
    <property type="protein sequence ID" value="CE05953"/>
    <property type="gene ID" value="WBGene00000728"/>
    <property type="gene designation" value="col-155"/>
</dbReference>
<dbReference type="eggNOG" id="KOG3544">
    <property type="taxonomic scope" value="Eukaryota"/>
</dbReference>
<dbReference type="GeneTree" id="ENSGT00970000196049"/>
<dbReference type="HOGENOM" id="CLU_001074_4_2_1"/>
<dbReference type="InParanoid" id="Q21184"/>
<dbReference type="OMA" id="GHHTAPD"/>
<dbReference type="OrthoDB" id="5920520at2759"/>
<dbReference type="PhylomeDB" id="Q21184"/>
<dbReference type="PRO" id="PR:Q21184"/>
<dbReference type="Proteomes" id="UP000001940">
    <property type="component" value="Chromosome V"/>
</dbReference>
<dbReference type="Bgee" id="WBGene00000728">
    <property type="expression patterns" value="Expressed in larva and 3 other cell types or tissues"/>
</dbReference>
<dbReference type="GO" id="GO:0005581">
    <property type="term" value="C:collagen trimer"/>
    <property type="evidence" value="ECO:0007669"/>
    <property type="project" value="UniProtKB-KW"/>
</dbReference>
<dbReference type="GO" id="GO:0042302">
    <property type="term" value="F:structural constituent of cuticle"/>
    <property type="evidence" value="ECO:0007669"/>
    <property type="project" value="UniProtKB-KW"/>
</dbReference>
<dbReference type="InterPro" id="IPR002486">
    <property type="entry name" value="Col_cuticle_N"/>
</dbReference>
<dbReference type="InterPro" id="IPR008160">
    <property type="entry name" value="Collagen"/>
</dbReference>
<dbReference type="PANTHER" id="PTHR24637">
    <property type="entry name" value="COLLAGEN"/>
    <property type="match status" value="1"/>
</dbReference>
<dbReference type="PANTHER" id="PTHR24637:SF302">
    <property type="entry name" value="NEMATODE CUTICLE COLLAGEN N-TERMINAL DOMAIN-CONTAINING PROTEIN-RELATED"/>
    <property type="match status" value="1"/>
</dbReference>
<dbReference type="Pfam" id="PF01484">
    <property type="entry name" value="Col_cuticle_N"/>
    <property type="match status" value="1"/>
</dbReference>
<dbReference type="Pfam" id="PF01391">
    <property type="entry name" value="Collagen"/>
    <property type="match status" value="2"/>
</dbReference>
<dbReference type="SMART" id="SM01088">
    <property type="entry name" value="Col_cuticle_N"/>
    <property type="match status" value="1"/>
</dbReference>
<sequence>MEFEQRIKAYRFVAYSAVAFSVVAVLSVCITLPMVHNYVHHVKRTMNQEVQFCRGSAKDIWTEVNELKSIQHANRTARQSGYDAGVNGGSASTGGCDACCLPGAAGPAGTPGKPGRPGKPGAPGLPGNPGHPPQQPCDPITPPPCQPCPQGPPGPPGPPGPSGDAGGNGNPGSPGQDGQPGAPGNKGPSGPNGNPGAPGAPGQPGQDAPSEPITPGAPGPQGTPGPQGPPGQPGQPGHDGQPGAPGPKGPNGNPGQPGADGNPGAPGQSGTPGGVGEKGICPKYCAIDGGVFFEDGTRR</sequence>
<proteinExistence type="inferred from homology"/>
<organism>
    <name type="scientific">Caenorhabditis elegans</name>
    <dbReference type="NCBI Taxonomy" id="6239"/>
    <lineage>
        <taxon>Eukaryota</taxon>
        <taxon>Metazoa</taxon>
        <taxon>Ecdysozoa</taxon>
        <taxon>Nematoda</taxon>
        <taxon>Chromadorea</taxon>
        <taxon>Rhabditida</taxon>
        <taxon>Rhabditina</taxon>
        <taxon>Rhabditomorpha</taxon>
        <taxon>Rhabditoidea</taxon>
        <taxon>Rhabditidae</taxon>
        <taxon>Peloderinae</taxon>
        <taxon>Caenorhabditis</taxon>
    </lineage>
</organism>